<protein>
    <recommendedName>
        <fullName evidence="1">NAD(P)H-quinone oxidoreductase chain 4 1</fullName>
        <ecNumber evidence="1">7.1.1.-</ecNumber>
    </recommendedName>
    <alternativeName>
        <fullName evidence="1">NAD(P)H dehydrogenase I, chain 4 1</fullName>
    </alternativeName>
    <alternativeName>
        <fullName evidence="1">NDH-1, chain 4 1</fullName>
    </alternativeName>
</protein>
<comment type="function">
    <text evidence="1">NDH-1 shuttles electrons from NAD(P)H, via FMN and iron-sulfur (Fe-S) centers, to quinones in the respiratory chain. The immediate electron acceptor for the enzyme in this species is believed to be plastoquinone. Couples the redox reaction to proton translocation (for every two electrons transferred, four hydrogen ions are translocated across the cytoplasmic membrane), and thus conserves the redox energy in a proton gradient.</text>
</comment>
<comment type="catalytic activity">
    <reaction evidence="1">
        <text>a plastoquinone + NADH + (n+1) H(+)(in) = a plastoquinol + NAD(+) + n H(+)(out)</text>
        <dbReference type="Rhea" id="RHEA:42608"/>
        <dbReference type="Rhea" id="RHEA-COMP:9561"/>
        <dbReference type="Rhea" id="RHEA-COMP:9562"/>
        <dbReference type="ChEBI" id="CHEBI:15378"/>
        <dbReference type="ChEBI" id="CHEBI:17757"/>
        <dbReference type="ChEBI" id="CHEBI:57540"/>
        <dbReference type="ChEBI" id="CHEBI:57945"/>
        <dbReference type="ChEBI" id="CHEBI:62192"/>
    </reaction>
</comment>
<comment type="catalytic activity">
    <reaction evidence="1">
        <text>a plastoquinone + NADPH + (n+1) H(+)(in) = a plastoquinol + NADP(+) + n H(+)(out)</text>
        <dbReference type="Rhea" id="RHEA:42612"/>
        <dbReference type="Rhea" id="RHEA-COMP:9561"/>
        <dbReference type="Rhea" id="RHEA-COMP:9562"/>
        <dbReference type="ChEBI" id="CHEBI:15378"/>
        <dbReference type="ChEBI" id="CHEBI:17757"/>
        <dbReference type="ChEBI" id="CHEBI:57783"/>
        <dbReference type="ChEBI" id="CHEBI:58349"/>
        <dbReference type="ChEBI" id="CHEBI:62192"/>
    </reaction>
</comment>
<comment type="interaction">
    <interactant intactId="EBI-629650">
        <id>Q8DKY0</id>
    </interactant>
    <interactant intactId="EBI-629633">
        <id>Q8DKX9</id>
        <label>ndhF1</label>
    </interactant>
    <organismsDiffer>false</organismsDiffer>
    <experiments>2</experiments>
</comment>
<comment type="subcellular location">
    <subcellularLocation>
        <location evidence="1">Cellular thylakoid membrane</location>
        <topology evidence="1">Multi-pass membrane protein</topology>
    </subcellularLocation>
</comment>
<comment type="similarity">
    <text evidence="1">Belongs to the complex I subunit 4 family.</text>
</comment>
<comment type="sequence caution" evidence="2">
    <conflict type="erroneous initiation">
        <sequence resource="EMBL-CDS" id="BAC08270"/>
    </conflict>
</comment>
<reference key="1">
    <citation type="journal article" date="2002" name="DNA Res.">
        <title>Complete genome structure of the thermophilic cyanobacterium Thermosynechococcus elongatus BP-1.</title>
        <authorList>
            <person name="Nakamura Y."/>
            <person name="Kaneko T."/>
            <person name="Sato S."/>
            <person name="Ikeuchi M."/>
            <person name="Katoh H."/>
            <person name="Sasamoto S."/>
            <person name="Watanabe A."/>
            <person name="Iriguchi M."/>
            <person name="Kawashima K."/>
            <person name="Kimura T."/>
            <person name="Kishida Y."/>
            <person name="Kiyokawa C."/>
            <person name="Kohara M."/>
            <person name="Matsumoto M."/>
            <person name="Matsuno A."/>
            <person name="Nakazaki N."/>
            <person name="Shimpo S."/>
            <person name="Sugimoto M."/>
            <person name="Takeuchi C."/>
            <person name="Yamada M."/>
            <person name="Tabata S."/>
        </authorList>
    </citation>
    <scope>NUCLEOTIDE SEQUENCE [LARGE SCALE GENOMIC DNA]</scope>
    <source>
        <strain>NIES-2133 / IAM M-273 / BP-1</strain>
    </source>
</reference>
<dbReference type="EC" id="7.1.1.-" evidence="1"/>
<dbReference type="EMBL" id="BA000039">
    <property type="protein sequence ID" value="BAC08270.1"/>
    <property type="status" value="ALT_INIT"/>
    <property type="molecule type" value="Genomic_DNA"/>
</dbReference>
<dbReference type="RefSeq" id="NP_681508.2">
    <property type="nucleotide sequence ID" value="NC_004113.1"/>
</dbReference>
<dbReference type="RefSeq" id="WP_011056566.1">
    <property type="nucleotide sequence ID" value="NC_004113.1"/>
</dbReference>
<dbReference type="PDB" id="6HUM">
    <property type="method" value="EM"/>
    <property type="resolution" value="3.34 A"/>
    <property type="chains" value="D=1-529"/>
</dbReference>
<dbReference type="PDB" id="6KHI">
    <property type="method" value="EM"/>
    <property type="resolution" value="3.00 A"/>
    <property type="chains" value="D=1-529"/>
</dbReference>
<dbReference type="PDB" id="6KHJ">
    <property type="method" value="EM"/>
    <property type="resolution" value="3.00 A"/>
    <property type="chains" value="D=1-529"/>
</dbReference>
<dbReference type="PDB" id="6L7O">
    <property type="method" value="EM"/>
    <property type="resolution" value="3.20 A"/>
    <property type="chains" value="D=1-529"/>
</dbReference>
<dbReference type="PDB" id="6L7P">
    <property type="method" value="EM"/>
    <property type="resolution" value="3.60 A"/>
    <property type="chains" value="D=1-529"/>
</dbReference>
<dbReference type="PDB" id="6NBQ">
    <property type="method" value="EM"/>
    <property type="resolution" value="3.10 A"/>
    <property type="chains" value="D=1-529"/>
</dbReference>
<dbReference type="PDB" id="6NBX">
    <property type="method" value="EM"/>
    <property type="resolution" value="3.50 A"/>
    <property type="chains" value="D=1-529"/>
</dbReference>
<dbReference type="PDB" id="6NBY">
    <property type="method" value="EM"/>
    <property type="resolution" value="3.10 A"/>
    <property type="chains" value="D=1-529"/>
</dbReference>
<dbReference type="PDBsum" id="6HUM"/>
<dbReference type="PDBsum" id="6KHI"/>
<dbReference type="PDBsum" id="6KHJ"/>
<dbReference type="PDBsum" id="6L7O"/>
<dbReference type="PDBsum" id="6L7P"/>
<dbReference type="PDBsum" id="6NBQ"/>
<dbReference type="PDBsum" id="6NBX"/>
<dbReference type="PDBsum" id="6NBY"/>
<dbReference type="EMDB" id="EMD-0281"/>
<dbReference type="EMDB" id="EMD-0415"/>
<dbReference type="EMDB" id="EMD-0425"/>
<dbReference type="EMDB" id="EMD-0849"/>
<dbReference type="EMDB" id="EMD-0850"/>
<dbReference type="EMDB" id="EMD-9989"/>
<dbReference type="EMDB" id="EMD-9990"/>
<dbReference type="SMR" id="Q8DKY0"/>
<dbReference type="IntAct" id="Q8DKY0">
    <property type="interactions" value="2"/>
</dbReference>
<dbReference type="STRING" id="197221.gene:10747309"/>
<dbReference type="TCDB" id="3.D.1.8.2">
    <property type="family name" value="the h+ or na+-translocating nadh dehydrogenase (ndh) family"/>
</dbReference>
<dbReference type="EnsemblBacteria" id="BAC08270">
    <property type="protein sequence ID" value="BAC08270"/>
    <property type="gene ID" value="BAC08270"/>
</dbReference>
<dbReference type="KEGG" id="tel:tll0719"/>
<dbReference type="PATRIC" id="fig|197221.4.peg.759"/>
<dbReference type="eggNOG" id="COG1008">
    <property type="taxonomic scope" value="Bacteria"/>
</dbReference>
<dbReference type="Proteomes" id="UP000000440">
    <property type="component" value="Chromosome"/>
</dbReference>
<dbReference type="GO" id="GO:0031676">
    <property type="term" value="C:plasma membrane-derived thylakoid membrane"/>
    <property type="evidence" value="ECO:0007669"/>
    <property type="project" value="UniProtKB-SubCell"/>
</dbReference>
<dbReference type="GO" id="GO:0008137">
    <property type="term" value="F:NADH dehydrogenase (ubiquinone) activity"/>
    <property type="evidence" value="ECO:0007669"/>
    <property type="project" value="InterPro"/>
</dbReference>
<dbReference type="GO" id="GO:0048039">
    <property type="term" value="F:ubiquinone binding"/>
    <property type="evidence" value="ECO:0007669"/>
    <property type="project" value="TreeGrafter"/>
</dbReference>
<dbReference type="GO" id="GO:0042773">
    <property type="term" value="P:ATP synthesis coupled electron transport"/>
    <property type="evidence" value="ECO:0007669"/>
    <property type="project" value="InterPro"/>
</dbReference>
<dbReference type="GO" id="GO:0015990">
    <property type="term" value="P:electron transport coupled proton transport"/>
    <property type="evidence" value="ECO:0007669"/>
    <property type="project" value="TreeGrafter"/>
</dbReference>
<dbReference type="HAMAP" id="MF_00491">
    <property type="entry name" value="NDH1_NuoM"/>
    <property type="match status" value="1"/>
</dbReference>
<dbReference type="InterPro" id="IPR022997">
    <property type="entry name" value="NADH_Q_OxRdtase_chain4"/>
</dbReference>
<dbReference type="InterPro" id="IPR010227">
    <property type="entry name" value="NADH_Q_OxRdtase_chainM/4"/>
</dbReference>
<dbReference type="InterPro" id="IPR003918">
    <property type="entry name" value="NADH_UbQ_OxRdtase"/>
</dbReference>
<dbReference type="InterPro" id="IPR001750">
    <property type="entry name" value="ND/Mrp_TM"/>
</dbReference>
<dbReference type="NCBIfam" id="TIGR01972">
    <property type="entry name" value="NDH_I_M"/>
    <property type="match status" value="1"/>
</dbReference>
<dbReference type="NCBIfam" id="NF002713">
    <property type="entry name" value="PRK02546.1"/>
    <property type="match status" value="1"/>
</dbReference>
<dbReference type="NCBIfam" id="NF009212">
    <property type="entry name" value="PRK12561.1"/>
    <property type="match status" value="1"/>
</dbReference>
<dbReference type="PANTHER" id="PTHR43507:SF21">
    <property type="entry name" value="NAD(P)H-QUINONE OXIDOREDUCTASE CHAIN 4, CHLOROPLASTIC"/>
    <property type="match status" value="1"/>
</dbReference>
<dbReference type="PANTHER" id="PTHR43507">
    <property type="entry name" value="NADH-UBIQUINONE OXIDOREDUCTASE CHAIN 4"/>
    <property type="match status" value="1"/>
</dbReference>
<dbReference type="Pfam" id="PF00361">
    <property type="entry name" value="Proton_antipo_M"/>
    <property type="match status" value="1"/>
</dbReference>
<dbReference type="PRINTS" id="PR01437">
    <property type="entry name" value="NUOXDRDTASE4"/>
</dbReference>
<feature type="chain" id="PRO_0000343245" description="NAD(P)H-quinone oxidoreductase chain 4 1">
    <location>
        <begin position="1"/>
        <end position="529"/>
    </location>
</feature>
<feature type="transmembrane region" description="Helical" evidence="1">
    <location>
        <begin position="4"/>
        <end position="24"/>
    </location>
</feature>
<feature type="transmembrane region" description="Helical" evidence="1">
    <location>
        <begin position="36"/>
        <end position="56"/>
    </location>
</feature>
<feature type="transmembrane region" description="Helical" evidence="1">
    <location>
        <begin position="91"/>
        <end position="111"/>
    </location>
</feature>
<feature type="transmembrane region" description="Helical" evidence="1">
    <location>
        <begin position="115"/>
        <end position="135"/>
    </location>
</feature>
<feature type="transmembrane region" description="Helical" evidence="1">
    <location>
        <begin position="137"/>
        <end position="157"/>
    </location>
</feature>
<feature type="transmembrane region" description="Helical" evidence="1">
    <location>
        <begin position="169"/>
        <end position="189"/>
    </location>
</feature>
<feature type="transmembrane region" description="Helical" evidence="1">
    <location>
        <begin position="209"/>
        <end position="229"/>
    </location>
</feature>
<feature type="transmembrane region" description="Helical" evidence="1">
    <location>
        <begin position="243"/>
        <end position="263"/>
    </location>
</feature>
<feature type="transmembrane region" description="Helical" evidence="1">
    <location>
        <begin position="277"/>
        <end position="297"/>
    </location>
</feature>
<feature type="transmembrane region" description="Helical" evidence="1">
    <location>
        <begin position="314"/>
        <end position="334"/>
    </location>
</feature>
<feature type="transmembrane region" description="Helical" evidence="1">
    <location>
        <begin position="335"/>
        <end position="355"/>
    </location>
</feature>
<feature type="transmembrane region" description="Helical" evidence="1">
    <location>
        <begin position="387"/>
        <end position="407"/>
    </location>
</feature>
<feature type="transmembrane region" description="Helical" evidence="1">
    <location>
        <begin position="417"/>
        <end position="437"/>
    </location>
</feature>
<feature type="helix" evidence="4">
    <location>
        <begin position="6"/>
        <end position="18"/>
    </location>
</feature>
<feature type="helix" evidence="7">
    <location>
        <begin position="21"/>
        <end position="23"/>
    </location>
</feature>
<feature type="strand" evidence="4">
    <location>
        <begin position="28"/>
        <end position="31"/>
    </location>
</feature>
<feature type="helix" evidence="4">
    <location>
        <begin position="32"/>
        <end position="56"/>
    </location>
</feature>
<feature type="strand" evidence="8">
    <location>
        <begin position="60"/>
        <end position="63"/>
    </location>
</feature>
<feature type="strand" evidence="4">
    <location>
        <begin position="65"/>
        <end position="68"/>
    </location>
</feature>
<feature type="strand" evidence="4">
    <location>
        <begin position="71"/>
        <end position="73"/>
    </location>
</feature>
<feature type="turn" evidence="4">
    <location>
        <begin position="74"/>
        <end position="77"/>
    </location>
</feature>
<feature type="strand" evidence="4">
    <location>
        <begin position="82"/>
        <end position="84"/>
    </location>
</feature>
<feature type="turn" evidence="4">
    <location>
        <begin position="86"/>
        <end position="88"/>
    </location>
</feature>
<feature type="helix" evidence="4">
    <location>
        <begin position="89"/>
        <end position="105"/>
    </location>
</feature>
<feature type="turn" evidence="4">
    <location>
        <begin position="106"/>
        <end position="108"/>
    </location>
</feature>
<feature type="helix" evidence="4">
    <location>
        <begin position="113"/>
        <end position="132"/>
    </location>
</feature>
<feature type="helix" evidence="4">
    <location>
        <begin position="136"/>
        <end position="144"/>
    </location>
</feature>
<feature type="helix" evidence="4">
    <location>
        <begin position="148"/>
        <end position="155"/>
    </location>
</feature>
<feature type="strand" evidence="4">
    <location>
        <begin position="156"/>
        <end position="158"/>
    </location>
</feature>
<feature type="strand" evidence="6">
    <location>
        <begin position="159"/>
        <end position="161"/>
    </location>
</feature>
<feature type="helix" evidence="4">
    <location>
        <begin position="162"/>
        <end position="188"/>
    </location>
</feature>
<feature type="strand" evidence="5">
    <location>
        <begin position="189"/>
        <end position="192"/>
    </location>
</feature>
<feature type="helix" evidence="4">
    <location>
        <begin position="198"/>
        <end position="202"/>
    </location>
</feature>
<feature type="helix" evidence="4">
    <location>
        <begin position="210"/>
        <end position="225"/>
    </location>
</feature>
<feature type="turn" evidence="3">
    <location>
        <begin position="231"/>
        <end position="233"/>
    </location>
</feature>
<feature type="helix" evidence="4">
    <location>
        <begin position="235"/>
        <end position="238"/>
    </location>
</feature>
<feature type="helix" evidence="4">
    <location>
        <begin position="244"/>
        <end position="250"/>
    </location>
</feature>
<feature type="turn" evidence="4">
    <location>
        <begin position="251"/>
        <end position="259"/>
    </location>
</feature>
<feature type="helix" evidence="4">
    <location>
        <begin position="261"/>
        <end position="264"/>
    </location>
</feature>
<feature type="turn" evidence="4">
    <location>
        <begin position="265"/>
        <end position="268"/>
    </location>
</feature>
<feature type="helix" evidence="4">
    <location>
        <begin position="271"/>
        <end position="296"/>
    </location>
</feature>
<feature type="helix" evidence="4">
    <location>
        <begin position="303"/>
        <end position="312"/>
    </location>
</feature>
<feature type="helix" evidence="4">
    <location>
        <begin position="315"/>
        <end position="322"/>
    </location>
</feature>
<feature type="helix" evidence="4">
    <location>
        <begin position="326"/>
        <end position="357"/>
    </location>
</feature>
<feature type="turn" evidence="4">
    <location>
        <begin position="362"/>
        <end position="364"/>
    </location>
</feature>
<feature type="helix" evidence="4">
    <location>
        <begin position="368"/>
        <end position="371"/>
    </location>
</feature>
<feature type="helix" evidence="4">
    <location>
        <begin position="374"/>
        <end position="386"/>
    </location>
</feature>
<feature type="helix" evidence="4">
    <location>
        <begin position="393"/>
        <end position="406"/>
    </location>
</feature>
<feature type="strand" evidence="9">
    <location>
        <begin position="409"/>
        <end position="411"/>
    </location>
</feature>
<feature type="helix" evidence="4">
    <location>
        <begin position="413"/>
        <end position="441"/>
    </location>
</feature>
<feature type="strand" evidence="4">
    <location>
        <begin position="443"/>
        <end position="445"/>
    </location>
</feature>
<feature type="turn" evidence="4">
    <location>
        <begin position="448"/>
        <end position="453"/>
    </location>
</feature>
<feature type="helix" evidence="4">
    <location>
        <begin position="461"/>
        <end position="479"/>
    </location>
</feature>
<feature type="helix" evidence="4">
    <location>
        <begin position="481"/>
        <end position="483"/>
    </location>
</feature>
<feature type="helix" evidence="4">
    <location>
        <begin position="485"/>
        <end position="498"/>
    </location>
</feature>
<gene>
    <name evidence="1" type="primary">ndhD1</name>
    <name type="ordered locus">tll0719</name>
</gene>
<sequence>MSTFPWLTTIILFPIVAALAIPFIPDPTGKGRPIRWYALAVGLIDFALIVYAFTNFYDLNTPGMQLWESYDWIPEIGLRWSVGADGLSMPLILLTGFITTLAILAAWPVTLKPRLFYFLMLAMYGGQIAVFAVQDMLVFFLAWELELIPVYLLLAIWGGHKRQYAATKFILYTAGSSLFILVAGLAMAFYGDTVSFDMQTLAAKDYALGFQLLVYAGFLVAYGVKLPIVPLHTWLPDAHGEATAPVHMLLAGILLKMGGYALIRMNVDMLPAAHAKFAPVLVILGVVNIIYAALTSYAQRNLKRKIAYSSISHIGFVLIGIASFTNLGMSGAVLQMVSHGLIGASLFFLVGATYDRTHTLILEEMGGVGQKMKKIFAMFTACSLASLALPGMSGFVAELMVFIGFATSDAYSLPFRVIVVFLAAVGVILTPIYLLSMLREIFYGPENKELVEHEALVDAEPREVFIIACLLVPIIGIGLYPKLLTQIYDATTGQVIARAREVLPTLAQQTEQPLGILPMVAPQLKANAQ</sequence>
<evidence type="ECO:0000255" key="1">
    <source>
        <dbReference type="HAMAP-Rule" id="MF_00491"/>
    </source>
</evidence>
<evidence type="ECO:0000305" key="2"/>
<evidence type="ECO:0007829" key="3">
    <source>
        <dbReference type="PDB" id="6HUM"/>
    </source>
</evidence>
<evidence type="ECO:0007829" key="4">
    <source>
        <dbReference type="PDB" id="6KHI"/>
    </source>
</evidence>
<evidence type="ECO:0007829" key="5">
    <source>
        <dbReference type="PDB" id="6KHJ"/>
    </source>
</evidence>
<evidence type="ECO:0007829" key="6">
    <source>
        <dbReference type="PDB" id="6L7O"/>
    </source>
</evidence>
<evidence type="ECO:0007829" key="7">
    <source>
        <dbReference type="PDB" id="6NBQ"/>
    </source>
</evidence>
<evidence type="ECO:0007829" key="8">
    <source>
        <dbReference type="PDB" id="6NBX"/>
    </source>
</evidence>
<evidence type="ECO:0007829" key="9">
    <source>
        <dbReference type="PDB" id="6NBY"/>
    </source>
</evidence>
<proteinExistence type="evidence at protein level"/>
<accession>Q8DKY0</accession>
<name>NU4C1_THEVB</name>
<organism>
    <name type="scientific">Thermosynechococcus vestitus (strain NIES-2133 / IAM M-273 / BP-1)</name>
    <dbReference type="NCBI Taxonomy" id="197221"/>
    <lineage>
        <taxon>Bacteria</taxon>
        <taxon>Bacillati</taxon>
        <taxon>Cyanobacteriota</taxon>
        <taxon>Cyanophyceae</taxon>
        <taxon>Acaryochloridales</taxon>
        <taxon>Thermosynechococcaceae</taxon>
        <taxon>Thermosynechococcus</taxon>
    </lineage>
</organism>
<keyword id="KW-0002">3D-structure</keyword>
<keyword id="KW-0472">Membrane</keyword>
<keyword id="KW-0520">NAD</keyword>
<keyword id="KW-0521">NADP</keyword>
<keyword id="KW-0618">Plastoquinone</keyword>
<keyword id="KW-0874">Quinone</keyword>
<keyword id="KW-1185">Reference proteome</keyword>
<keyword id="KW-0793">Thylakoid</keyword>
<keyword id="KW-1278">Translocase</keyword>
<keyword id="KW-0812">Transmembrane</keyword>
<keyword id="KW-1133">Transmembrane helix</keyword>